<dbReference type="EMBL" id="M81413">
    <property type="protein sequence ID" value="AAB02337.1"/>
    <property type="molecule type" value="Genomic_RNA"/>
</dbReference>
<dbReference type="PIR" id="JQ1315">
    <property type="entry name" value="VCTMPV"/>
</dbReference>
<dbReference type="RefSeq" id="NP_619743.1">
    <property type="nucleotide sequence ID" value="NC_003630.1"/>
</dbReference>
<dbReference type="SMR" id="P69510"/>
<dbReference type="GeneID" id="940236"/>
<dbReference type="KEGG" id="vg:940236"/>
<dbReference type="Proteomes" id="UP000000476">
    <property type="component" value="Segment"/>
</dbReference>
<dbReference type="GO" id="GO:0019029">
    <property type="term" value="C:helical viral capsid"/>
    <property type="evidence" value="ECO:0007669"/>
    <property type="project" value="UniProtKB-KW"/>
</dbReference>
<dbReference type="GO" id="GO:0005198">
    <property type="term" value="F:structural molecule activity"/>
    <property type="evidence" value="ECO:0007669"/>
    <property type="project" value="InterPro"/>
</dbReference>
<dbReference type="Gene3D" id="1.20.120.70">
    <property type="entry name" value="Tobacco mosaic virus-like, coat protein"/>
    <property type="match status" value="1"/>
</dbReference>
<dbReference type="InterPro" id="IPR001337">
    <property type="entry name" value="TMV-like_coat"/>
</dbReference>
<dbReference type="InterPro" id="IPR036417">
    <property type="entry name" value="TMV-like_coat_sf"/>
</dbReference>
<dbReference type="Pfam" id="PF00721">
    <property type="entry name" value="TMV_coat"/>
    <property type="match status" value="1"/>
</dbReference>
<dbReference type="SUPFAM" id="SSF47195">
    <property type="entry name" value="TMV-like viral coat proteins"/>
    <property type="match status" value="1"/>
</dbReference>
<gene>
    <name type="primary">CP</name>
</gene>
<reference key="1">
    <citation type="journal article" date="1991" name="J. Gen. Virol.">
        <title>Nucleotide sequence of the genomic RNA of pepper mild mottle virus, a resistance-breaking tobamovirus in pepper.</title>
        <authorList>
            <person name="Alonso E."/>
            <person name="Garcia-Luque I."/>
            <person name="de la Cruz A."/>
            <person name="Wicke B."/>
            <person name="Avila-Rincon M.J."/>
            <person name="Serra M.T."/>
            <person name="Castresana C."/>
            <person name="Diaz-Ruiz J.R."/>
        </authorList>
    </citation>
    <scope>NUCLEOTIDE SEQUENCE [GENOMIC RNA]</scope>
</reference>
<keyword id="KW-0007">Acetylation</keyword>
<keyword id="KW-0167">Capsid protein</keyword>
<keyword id="KW-1139">Helical capsid protein</keyword>
<keyword id="KW-0946">Virion</keyword>
<proteinExistence type="inferred from homology"/>
<evidence type="ECO:0000250" key="1"/>
<evidence type="ECO:0000305" key="2"/>
<organismHost>
    <name type="scientific">Capsicum annuum</name>
    <name type="common">Capsicum pepper</name>
    <dbReference type="NCBI Taxonomy" id="4072"/>
</organismHost>
<comment type="function">
    <text>Capsid protein self-assembles to form rod-shaped virions about 18 nm in diameter with a central canal enclosing the viral genomic RNA.</text>
</comment>
<comment type="subcellular location">
    <subcellularLocation>
        <location evidence="2">Virion</location>
    </subcellularLocation>
</comment>
<comment type="similarity">
    <text evidence="2">Belongs to the virgaviridae capsid protein family.</text>
</comment>
<sequence>MAYTVSSANQLVYLGSVWADPLELQNLCTSALGNQFQTQQARTTVQQQFSDVWKTIPTATVRFPATGFKVFRYNAVLDSLVSALLGAFDTRNRIIEVENPQNPTTAETLDATRRVDDATVAIRASISNLMNELVRGTGMYNQALFESASGLTWATTP</sequence>
<feature type="initiator methionine" description="Removed; by host" evidence="1">
    <location>
        <position position="1"/>
    </location>
</feature>
<feature type="chain" id="PRO_0000144937" description="Capsid protein">
    <location>
        <begin position="2"/>
        <end position="157"/>
    </location>
</feature>
<feature type="modified residue" description="N-acetylalanine; by host" evidence="1">
    <location>
        <position position="2"/>
    </location>
</feature>
<name>CAPSD_PMMVS</name>
<protein>
    <recommendedName>
        <fullName>Capsid protein</fullName>
    </recommendedName>
    <alternativeName>
        <fullName>Coat protein</fullName>
    </alternativeName>
</protein>
<organism>
    <name type="scientific">Pepper mild mottle virus (strain Spain)</name>
    <name type="common">PMMV-S</name>
    <dbReference type="NCBI Taxonomy" id="31745"/>
    <lineage>
        <taxon>Viruses</taxon>
        <taxon>Riboviria</taxon>
        <taxon>Orthornavirae</taxon>
        <taxon>Kitrinoviricota</taxon>
        <taxon>Alsuviricetes</taxon>
        <taxon>Martellivirales</taxon>
        <taxon>Virgaviridae</taxon>
        <taxon>Tobamovirus</taxon>
        <taxon>Pepper mild mottle virus</taxon>
    </lineage>
</organism>
<accession>P69510</accession>
<accession>P29096</accession>